<proteinExistence type="inferred from homology"/>
<sequence length="235" mass="25759">MVHIISKKTVSFIGQKLAAQIDEQLFTKYGFKVEQLMELAGLAAAQAIAAHYPKSNVAVLCGPGNNGGDGFVCARHLQQFGFTPSIVYPKESRNELMKSLVVQCETSSIPITATLPTNLQAFPLIVDALFGFSFHPPTREPFTEMLKTVRASGIHVFSIDVPSGWDVELGAPSGNDDDVIHPHSVISLTLPKLCMKNWTGPHFLGGRFVPKSLVDEHELLMPQYPGFEQIVKLED</sequence>
<accession>Q9XW15</accession>
<dbReference type="EC" id="5.1.99.6"/>
<dbReference type="EMBL" id="BX284601">
    <property type="protein sequence ID" value="CAA22319.2"/>
    <property type="molecule type" value="Genomic_DNA"/>
</dbReference>
<dbReference type="PIR" id="T26528">
    <property type="entry name" value="T26528"/>
</dbReference>
<dbReference type="RefSeq" id="NP_001364575.1">
    <property type="nucleotide sequence ID" value="NM_001377663.1"/>
</dbReference>
<dbReference type="RefSeq" id="NP_493241.1">
    <property type="nucleotide sequence ID" value="NM_060840.1"/>
</dbReference>
<dbReference type="SMR" id="Q9XW15"/>
<dbReference type="FunCoup" id="Q9XW15">
    <property type="interactions" value="1421"/>
</dbReference>
<dbReference type="STRING" id="6239.Y18D10A.3.1"/>
<dbReference type="PaxDb" id="6239-Y18D10A.3"/>
<dbReference type="PeptideAtlas" id="Q9XW15"/>
<dbReference type="EnsemblMetazoa" id="Y18D10A.3.1">
    <property type="protein sequence ID" value="Y18D10A.3.1"/>
    <property type="gene ID" value="WBGene00012476"/>
</dbReference>
<dbReference type="GeneID" id="189472"/>
<dbReference type="UCSC" id="Y18D10A.3">
    <property type="organism name" value="c. elegans"/>
</dbReference>
<dbReference type="AGR" id="WB:WBGene00012476"/>
<dbReference type="WormBase" id="Y18D10A.3">
    <property type="protein sequence ID" value="CE53972"/>
    <property type="gene ID" value="WBGene00012476"/>
</dbReference>
<dbReference type="eggNOG" id="KOG2585">
    <property type="taxonomic scope" value="Eukaryota"/>
</dbReference>
<dbReference type="GeneTree" id="ENSGT00390000007227"/>
<dbReference type="HOGENOM" id="CLU_024853_3_0_1"/>
<dbReference type="InParanoid" id="Q9XW15"/>
<dbReference type="OrthoDB" id="10064708at2759"/>
<dbReference type="Reactome" id="R-CEL-197264">
    <property type="pathway name" value="Nicotinamide salvaging"/>
</dbReference>
<dbReference type="PRO" id="PR:Q9XW15"/>
<dbReference type="Proteomes" id="UP000001940">
    <property type="component" value="Chromosome I"/>
</dbReference>
<dbReference type="Bgee" id="WBGene00012476">
    <property type="expression patterns" value="Expressed in pharyngeal muscle cell (C elegans) and 3 other cell types or tissues"/>
</dbReference>
<dbReference type="GO" id="GO:0005739">
    <property type="term" value="C:mitochondrion"/>
    <property type="evidence" value="ECO:0000318"/>
    <property type="project" value="GO_Central"/>
</dbReference>
<dbReference type="GO" id="GO:0046872">
    <property type="term" value="F:metal ion binding"/>
    <property type="evidence" value="ECO:0007669"/>
    <property type="project" value="UniProtKB-KW"/>
</dbReference>
<dbReference type="GO" id="GO:0052856">
    <property type="term" value="F:NAD(P)HX epimerase activity"/>
    <property type="evidence" value="ECO:0000318"/>
    <property type="project" value="GO_Central"/>
</dbReference>
<dbReference type="GO" id="GO:0000166">
    <property type="term" value="F:nucleotide binding"/>
    <property type="evidence" value="ECO:0007669"/>
    <property type="project" value="UniProtKB-KW"/>
</dbReference>
<dbReference type="FunFam" id="3.40.50.10260:FF:000013">
    <property type="entry name" value="NAD(P)H-hydrate epimerase"/>
    <property type="match status" value="1"/>
</dbReference>
<dbReference type="Gene3D" id="3.40.50.10260">
    <property type="entry name" value="YjeF N-terminal domain"/>
    <property type="match status" value="1"/>
</dbReference>
<dbReference type="HAMAP" id="MF_01966">
    <property type="entry name" value="NADHX_epimerase"/>
    <property type="match status" value="1"/>
</dbReference>
<dbReference type="InterPro" id="IPR004443">
    <property type="entry name" value="YjeF_N_dom"/>
</dbReference>
<dbReference type="InterPro" id="IPR036652">
    <property type="entry name" value="YjeF_N_dom_sf"/>
</dbReference>
<dbReference type="InterPro" id="IPR032976">
    <property type="entry name" value="YJEFN_prot_NAXE-like"/>
</dbReference>
<dbReference type="NCBIfam" id="TIGR00197">
    <property type="entry name" value="yjeF_nterm"/>
    <property type="match status" value="1"/>
</dbReference>
<dbReference type="PANTHER" id="PTHR13232">
    <property type="entry name" value="NAD(P)H-HYDRATE EPIMERASE"/>
    <property type="match status" value="1"/>
</dbReference>
<dbReference type="PANTHER" id="PTHR13232:SF10">
    <property type="entry name" value="NAD(P)H-HYDRATE EPIMERASE"/>
    <property type="match status" value="1"/>
</dbReference>
<dbReference type="Pfam" id="PF03853">
    <property type="entry name" value="YjeF_N"/>
    <property type="match status" value="1"/>
</dbReference>
<dbReference type="SUPFAM" id="SSF64153">
    <property type="entry name" value="YjeF N-terminal domain-like"/>
    <property type="match status" value="1"/>
</dbReference>
<dbReference type="PROSITE" id="PS51385">
    <property type="entry name" value="YJEF_N"/>
    <property type="match status" value="1"/>
</dbReference>
<gene>
    <name evidence="2" type="ORF">Y18D10A.3</name>
</gene>
<name>NNRE_CAEEL</name>
<comment type="function">
    <text evidence="1">Catalyzes the epimerization of the S- and R-forms of NAD(P)HX, a damaged form of NAD(P)H that is a result of enzymatic or heat-dependent hydration. This is a prerequisite for the S-specific NAD(P)H-hydrate dehydratase to allow the repair of both epimers of NAD(P)HX.</text>
</comment>
<comment type="catalytic activity">
    <reaction>
        <text>(6R)-NADHX = (6S)-NADHX</text>
        <dbReference type="Rhea" id="RHEA:32215"/>
        <dbReference type="ChEBI" id="CHEBI:64074"/>
        <dbReference type="ChEBI" id="CHEBI:64075"/>
        <dbReference type="EC" id="5.1.99.6"/>
    </reaction>
</comment>
<comment type="catalytic activity">
    <reaction>
        <text>(6R)-NADPHX = (6S)-NADPHX</text>
        <dbReference type="Rhea" id="RHEA:32227"/>
        <dbReference type="ChEBI" id="CHEBI:64076"/>
        <dbReference type="ChEBI" id="CHEBI:64077"/>
        <dbReference type="EC" id="5.1.99.6"/>
    </reaction>
</comment>
<comment type="cofactor">
    <cofactor evidence="1">
        <name>K(+)</name>
        <dbReference type="ChEBI" id="CHEBI:29103"/>
    </cofactor>
    <text evidence="1">Binds 1 potassium ion per subunit.</text>
</comment>
<comment type="similarity">
    <text evidence="1">Belongs to the NnrE/AIBP family.</text>
</comment>
<reference key="1">
    <citation type="journal article" date="1998" name="Science">
        <title>Genome sequence of the nematode C. elegans: a platform for investigating biology.</title>
        <authorList>
            <consortium name="The C. elegans sequencing consortium"/>
        </authorList>
    </citation>
    <scope>NUCLEOTIDE SEQUENCE [LARGE SCALE GENOMIC DNA]</scope>
    <source>
        <strain>Bristol N2</strain>
    </source>
</reference>
<keyword id="KW-0413">Isomerase</keyword>
<keyword id="KW-0479">Metal-binding</keyword>
<keyword id="KW-0520">NAD</keyword>
<keyword id="KW-0521">NADP</keyword>
<keyword id="KW-0547">Nucleotide-binding</keyword>
<keyword id="KW-0630">Potassium</keyword>
<keyword id="KW-1185">Reference proteome</keyword>
<feature type="chain" id="PRO_0000416313" description="NAD(P)H-hydrate epimerase">
    <location>
        <begin position="1"/>
        <end position="235"/>
    </location>
</feature>
<feature type="domain" description="YjeF N-terminal" evidence="1">
    <location>
        <begin position="18"/>
        <end position="221"/>
    </location>
</feature>
<feature type="binding site" evidence="1">
    <location>
        <begin position="65"/>
        <end position="69"/>
    </location>
    <ligand>
        <name>(6S)-NADPHX</name>
        <dbReference type="ChEBI" id="CHEBI:64076"/>
    </ligand>
</feature>
<feature type="binding site" evidence="1">
    <location>
        <position position="66"/>
    </location>
    <ligand>
        <name>K(+)</name>
        <dbReference type="ChEBI" id="CHEBI:29103"/>
    </ligand>
</feature>
<feature type="binding site" evidence="1">
    <location>
        <position position="127"/>
    </location>
    <ligand>
        <name>K(+)</name>
        <dbReference type="ChEBI" id="CHEBI:29103"/>
    </ligand>
</feature>
<feature type="binding site" evidence="1">
    <location>
        <begin position="131"/>
        <end position="137"/>
    </location>
    <ligand>
        <name>(6S)-NADPHX</name>
        <dbReference type="ChEBI" id="CHEBI:64076"/>
    </ligand>
</feature>
<feature type="binding site" evidence="1">
    <location>
        <position position="160"/>
    </location>
    <ligand>
        <name>(6S)-NADPHX</name>
        <dbReference type="ChEBI" id="CHEBI:64076"/>
    </ligand>
</feature>
<feature type="binding site" evidence="1">
    <location>
        <position position="163"/>
    </location>
    <ligand>
        <name>K(+)</name>
        <dbReference type="ChEBI" id="CHEBI:29103"/>
    </ligand>
</feature>
<evidence type="ECO:0000255" key="1">
    <source>
        <dbReference type="HAMAP-Rule" id="MF_03159"/>
    </source>
</evidence>
<evidence type="ECO:0000312" key="2">
    <source>
        <dbReference type="WormBase" id="Y18D10A.3"/>
    </source>
</evidence>
<protein>
    <recommendedName>
        <fullName evidence="1">NAD(P)H-hydrate epimerase</fullName>
        <ecNumber>5.1.99.6</ecNumber>
    </recommendedName>
    <alternativeName>
        <fullName evidence="1">NAD(P)HX epimerase</fullName>
    </alternativeName>
</protein>
<organism>
    <name type="scientific">Caenorhabditis elegans</name>
    <dbReference type="NCBI Taxonomy" id="6239"/>
    <lineage>
        <taxon>Eukaryota</taxon>
        <taxon>Metazoa</taxon>
        <taxon>Ecdysozoa</taxon>
        <taxon>Nematoda</taxon>
        <taxon>Chromadorea</taxon>
        <taxon>Rhabditida</taxon>
        <taxon>Rhabditina</taxon>
        <taxon>Rhabditomorpha</taxon>
        <taxon>Rhabditoidea</taxon>
        <taxon>Rhabditidae</taxon>
        <taxon>Peloderinae</taxon>
        <taxon>Caenorhabditis</taxon>
    </lineage>
</organism>